<organism>
    <name type="scientific">Streptomyces avermitilis (strain ATCC 31267 / DSM 46492 / JCM 5070 / NBRC 14893 / NCIMB 12804 / NRRL 8165 / MA-4680)</name>
    <dbReference type="NCBI Taxonomy" id="227882"/>
    <lineage>
        <taxon>Bacteria</taxon>
        <taxon>Bacillati</taxon>
        <taxon>Actinomycetota</taxon>
        <taxon>Actinomycetes</taxon>
        <taxon>Kitasatosporales</taxon>
        <taxon>Streptomycetaceae</taxon>
        <taxon>Streptomyces</taxon>
    </lineage>
</organism>
<sequence>MISPVSSIPRSAHRSRPEATPYLDLTRAEWSALREKTPLPLNAEEVEKLRGLGDVIDLDEVRDIYLPLSRLLNLYVGATDGLRGALNTFLGEQGSQSGTPFVIGVAGSVAVGKSTVARLLQALLSRWPEHPRVELVTTDGFLLPTKELEARGLMSRKGFPESYDRRALTRFVADIKAGKDEVTAPVYSHLIYDIVPGQKLTVRRPDILIVEGLNVLQPALPGKDGRTRVGLADYFDFSVYVDARPEDIERWYLNRFRKLRATAFQNPSSYFRRYTQVSEDEALDYARTTWRTINKVNLLENVAPTRGRAALVVRKGPDHKVQRLSLRKL</sequence>
<gene>
    <name evidence="1" type="primary">coaA</name>
    <name type="ordered locus">SAV_4961</name>
</gene>
<dbReference type="EC" id="2.7.1.33" evidence="1"/>
<dbReference type="EMBL" id="BA000030">
    <property type="protein sequence ID" value="BAC72673.1"/>
    <property type="molecule type" value="Genomic_DNA"/>
</dbReference>
<dbReference type="RefSeq" id="WP_010986367.1">
    <property type="nucleotide sequence ID" value="NZ_JZJK01000077.1"/>
</dbReference>
<dbReference type="SMR" id="Q82DL5"/>
<dbReference type="GeneID" id="41542044"/>
<dbReference type="KEGG" id="sma:SAVERM_4961"/>
<dbReference type="eggNOG" id="COG1072">
    <property type="taxonomic scope" value="Bacteria"/>
</dbReference>
<dbReference type="HOGENOM" id="CLU_053818_1_1_11"/>
<dbReference type="OrthoDB" id="1550976at2"/>
<dbReference type="UniPathway" id="UPA00241">
    <property type="reaction ID" value="UER00352"/>
</dbReference>
<dbReference type="Proteomes" id="UP000000428">
    <property type="component" value="Chromosome"/>
</dbReference>
<dbReference type="GO" id="GO:0005737">
    <property type="term" value="C:cytoplasm"/>
    <property type="evidence" value="ECO:0007669"/>
    <property type="project" value="UniProtKB-SubCell"/>
</dbReference>
<dbReference type="GO" id="GO:0005524">
    <property type="term" value="F:ATP binding"/>
    <property type="evidence" value="ECO:0007669"/>
    <property type="project" value="UniProtKB-UniRule"/>
</dbReference>
<dbReference type="GO" id="GO:0004594">
    <property type="term" value="F:pantothenate kinase activity"/>
    <property type="evidence" value="ECO:0007669"/>
    <property type="project" value="UniProtKB-UniRule"/>
</dbReference>
<dbReference type="GO" id="GO:0015937">
    <property type="term" value="P:coenzyme A biosynthetic process"/>
    <property type="evidence" value="ECO:0007669"/>
    <property type="project" value="UniProtKB-UniRule"/>
</dbReference>
<dbReference type="CDD" id="cd02025">
    <property type="entry name" value="PanK"/>
    <property type="match status" value="1"/>
</dbReference>
<dbReference type="FunFam" id="3.40.50.300:FF:000242">
    <property type="entry name" value="Pantothenate kinase"/>
    <property type="match status" value="1"/>
</dbReference>
<dbReference type="Gene3D" id="3.40.50.300">
    <property type="entry name" value="P-loop containing nucleotide triphosphate hydrolases"/>
    <property type="match status" value="1"/>
</dbReference>
<dbReference type="HAMAP" id="MF_00215">
    <property type="entry name" value="Pantothen_kinase_1"/>
    <property type="match status" value="1"/>
</dbReference>
<dbReference type="InterPro" id="IPR027417">
    <property type="entry name" value="P-loop_NTPase"/>
</dbReference>
<dbReference type="InterPro" id="IPR004566">
    <property type="entry name" value="PanK"/>
</dbReference>
<dbReference type="InterPro" id="IPR006083">
    <property type="entry name" value="PRK/URK"/>
</dbReference>
<dbReference type="NCBIfam" id="TIGR00554">
    <property type="entry name" value="panK_bact"/>
    <property type="match status" value="1"/>
</dbReference>
<dbReference type="PANTHER" id="PTHR10285">
    <property type="entry name" value="URIDINE KINASE"/>
    <property type="match status" value="1"/>
</dbReference>
<dbReference type="Pfam" id="PF00485">
    <property type="entry name" value="PRK"/>
    <property type="match status" value="1"/>
</dbReference>
<dbReference type="PIRSF" id="PIRSF000545">
    <property type="entry name" value="Pantothenate_kin"/>
    <property type="match status" value="1"/>
</dbReference>
<dbReference type="SUPFAM" id="SSF52540">
    <property type="entry name" value="P-loop containing nucleoside triphosphate hydrolases"/>
    <property type="match status" value="1"/>
</dbReference>
<name>COAA_STRAW</name>
<feature type="chain" id="PRO_0000194451" description="Pantothenate kinase">
    <location>
        <begin position="1"/>
        <end position="329"/>
    </location>
</feature>
<feature type="binding site" evidence="1">
    <location>
        <begin position="107"/>
        <end position="114"/>
    </location>
    <ligand>
        <name>ATP</name>
        <dbReference type="ChEBI" id="CHEBI:30616"/>
    </ligand>
</feature>
<protein>
    <recommendedName>
        <fullName evidence="1">Pantothenate kinase</fullName>
        <ecNumber evidence="1">2.7.1.33</ecNumber>
    </recommendedName>
    <alternativeName>
        <fullName evidence="1">Pantothenic acid kinase</fullName>
    </alternativeName>
</protein>
<reference key="1">
    <citation type="journal article" date="2001" name="Proc. Natl. Acad. Sci. U.S.A.">
        <title>Genome sequence of an industrial microorganism Streptomyces avermitilis: deducing the ability of producing secondary metabolites.</title>
        <authorList>
            <person name="Omura S."/>
            <person name="Ikeda H."/>
            <person name="Ishikawa J."/>
            <person name="Hanamoto A."/>
            <person name="Takahashi C."/>
            <person name="Shinose M."/>
            <person name="Takahashi Y."/>
            <person name="Horikawa H."/>
            <person name="Nakazawa H."/>
            <person name="Osonoe T."/>
            <person name="Kikuchi H."/>
            <person name="Shiba T."/>
            <person name="Sakaki Y."/>
            <person name="Hattori M."/>
        </authorList>
    </citation>
    <scope>NUCLEOTIDE SEQUENCE [LARGE SCALE GENOMIC DNA]</scope>
    <source>
        <strain>ATCC 31267 / DSM 46492 / JCM 5070 / NBRC 14893 / NCIMB 12804 / NRRL 8165 / MA-4680</strain>
    </source>
</reference>
<reference key="2">
    <citation type="journal article" date="2003" name="Nat. Biotechnol.">
        <title>Complete genome sequence and comparative analysis of the industrial microorganism Streptomyces avermitilis.</title>
        <authorList>
            <person name="Ikeda H."/>
            <person name="Ishikawa J."/>
            <person name="Hanamoto A."/>
            <person name="Shinose M."/>
            <person name="Kikuchi H."/>
            <person name="Shiba T."/>
            <person name="Sakaki Y."/>
            <person name="Hattori M."/>
            <person name="Omura S."/>
        </authorList>
    </citation>
    <scope>NUCLEOTIDE SEQUENCE [LARGE SCALE GENOMIC DNA]</scope>
    <source>
        <strain>ATCC 31267 / DSM 46492 / JCM 5070 / NBRC 14893 / NCIMB 12804 / NRRL 8165 / MA-4680</strain>
    </source>
</reference>
<accession>Q82DL5</accession>
<comment type="catalytic activity">
    <reaction evidence="1">
        <text>(R)-pantothenate + ATP = (R)-4'-phosphopantothenate + ADP + H(+)</text>
        <dbReference type="Rhea" id="RHEA:16373"/>
        <dbReference type="ChEBI" id="CHEBI:10986"/>
        <dbReference type="ChEBI" id="CHEBI:15378"/>
        <dbReference type="ChEBI" id="CHEBI:29032"/>
        <dbReference type="ChEBI" id="CHEBI:30616"/>
        <dbReference type="ChEBI" id="CHEBI:456216"/>
        <dbReference type="EC" id="2.7.1.33"/>
    </reaction>
</comment>
<comment type="pathway">
    <text evidence="1">Cofactor biosynthesis; coenzyme A biosynthesis; CoA from (R)-pantothenate: step 1/5.</text>
</comment>
<comment type="subcellular location">
    <subcellularLocation>
        <location evidence="1">Cytoplasm</location>
    </subcellularLocation>
</comment>
<comment type="similarity">
    <text evidence="1">Belongs to the prokaryotic pantothenate kinase family.</text>
</comment>
<proteinExistence type="inferred from homology"/>
<keyword id="KW-0067">ATP-binding</keyword>
<keyword id="KW-0173">Coenzyme A biosynthesis</keyword>
<keyword id="KW-0963">Cytoplasm</keyword>
<keyword id="KW-0418">Kinase</keyword>
<keyword id="KW-0547">Nucleotide-binding</keyword>
<keyword id="KW-1185">Reference proteome</keyword>
<keyword id="KW-0808">Transferase</keyword>
<evidence type="ECO:0000255" key="1">
    <source>
        <dbReference type="HAMAP-Rule" id="MF_00215"/>
    </source>
</evidence>